<organism>
    <name type="scientific">Salmonella arizonae (strain ATCC BAA-731 / CDC346-86 / RSK2980)</name>
    <dbReference type="NCBI Taxonomy" id="41514"/>
    <lineage>
        <taxon>Bacteria</taxon>
        <taxon>Pseudomonadati</taxon>
        <taxon>Pseudomonadota</taxon>
        <taxon>Gammaproteobacteria</taxon>
        <taxon>Enterobacterales</taxon>
        <taxon>Enterobacteriaceae</taxon>
        <taxon>Salmonella</taxon>
    </lineage>
</organism>
<name>MINE_SALAR</name>
<protein>
    <recommendedName>
        <fullName evidence="1">Cell division topological specificity factor</fullName>
    </recommendedName>
</protein>
<feature type="chain" id="PRO_1000078644" description="Cell division topological specificity factor">
    <location>
        <begin position="1"/>
        <end position="88"/>
    </location>
</feature>
<comment type="function">
    <text evidence="1">Prevents the cell division inhibition by proteins MinC and MinD at internal division sites while permitting inhibition at polar sites. This ensures cell division at the proper site by restricting the formation of a division septum at the midpoint of the long axis of the cell.</text>
</comment>
<comment type="similarity">
    <text evidence="1">Belongs to the MinE family.</text>
</comment>
<dbReference type="EMBL" id="CP000880">
    <property type="protein sequence ID" value="ABX21028.1"/>
    <property type="molecule type" value="Genomic_DNA"/>
</dbReference>
<dbReference type="SMR" id="A9MP47"/>
<dbReference type="STRING" id="41514.SARI_01123"/>
<dbReference type="KEGG" id="ses:SARI_01123"/>
<dbReference type="HOGENOM" id="CLU_137929_2_2_6"/>
<dbReference type="Proteomes" id="UP000002084">
    <property type="component" value="Chromosome"/>
</dbReference>
<dbReference type="GO" id="GO:0051301">
    <property type="term" value="P:cell division"/>
    <property type="evidence" value="ECO:0007669"/>
    <property type="project" value="UniProtKB-KW"/>
</dbReference>
<dbReference type="GO" id="GO:0032955">
    <property type="term" value="P:regulation of division septum assembly"/>
    <property type="evidence" value="ECO:0007669"/>
    <property type="project" value="InterPro"/>
</dbReference>
<dbReference type="FunFam" id="3.30.1070.10:FF:000001">
    <property type="entry name" value="Cell division topological specificity factor"/>
    <property type="match status" value="1"/>
</dbReference>
<dbReference type="Gene3D" id="3.30.1070.10">
    <property type="entry name" value="Cell division topological specificity factor MinE"/>
    <property type="match status" value="1"/>
</dbReference>
<dbReference type="HAMAP" id="MF_00262">
    <property type="entry name" value="MinE"/>
    <property type="match status" value="1"/>
</dbReference>
<dbReference type="InterPro" id="IPR005527">
    <property type="entry name" value="MinE"/>
</dbReference>
<dbReference type="InterPro" id="IPR036707">
    <property type="entry name" value="MinE_sf"/>
</dbReference>
<dbReference type="NCBIfam" id="TIGR01215">
    <property type="entry name" value="minE"/>
    <property type="match status" value="1"/>
</dbReference>
<dbReference type="NCBIfam" id="NF001422">
    <property type="entry name" value="PRK00296.1"/>
    <property type="match status" value="1"/>
</dbReference>
<dbReference type="Pfam" id="PF03776">
    <property type="entry name" value="MinE"/>
    <property type="match status" value="1"/>
</dbReference>
<dbReference type="SUPFAM" id="SSF55229">
    <property type="entry name" value="Cell division protein MinE topological specificity domain"/>
    <property type="match status" value="1"/>
</dbReference>
<proteinExistence type="inferred from homology"/>
<sequence>MALLDFFLSRKKSTANIAKERLQIIVAERRRSDAEPHYLPQLRKDILEVICKYVQIDPEMVTVQLEQKDGDISILELNVTLPEAEESK</sequence>
<accession>A9MP47</accession>
<gene>
    <name evidence="1" type="primary">minE</name>
    <name type="ordered locus">SARI_01123</name>
</gene>
<evidence type="ECO:0000255" key="1">
    <source>
        <dbReference type="HAMAP-Rule" id="MF_00262"/>
    </source>
</evidence>
<keyword id="KW-0131">Cell cycle</keyword>
<keyword id="KW-0132">Cell division</keyword>
<keyword id="KW-1185">Reference proteome</keyword>
<reference key="1">
    <citation type="submission" date="2007-11" db="EMBL/GenBank/DDBJ databases">
        <authorList>
            <consortium name="The Salmonella enterica serovar Arizonae Genome Sequencing Project"/>
            <person name="McClelland M."/>
            <person name="Sanderson E.K."/>
            <person name="Porwollik S."/>
            <person name="Spieth J."/>
            <person name="Clifton W.S."/>
            <person name="Fulton R."/>
            <person name="Chunyan W."/>
            <person name="Wollam A."/>
            <person name="Shah N."/>
            <person name="Pepin K."/>
            <person name="Bhonagiri V."/>
            <person name="Nash W."/>
            <person name="Johnson M."/>
            <person name="Thiruvilangam P."/>
            <person name="Wilson R."/>
        </authorList>
    </citation>
    <scope>NUCLEOTIDE SEQUENCE [LARGE SCALE GENOMIC DNA]</scope>
    <source>
        <strain>ATCC BAA-731 / CDC346-86 / RSK2980</strain>
    </source>
</reference>